<feature type="chain" id="PRO_0000341961" description="Bicarbonate transport system permease protein CmpB">
    <location>
        <begin position="1"/>
        <end position="278"/>
    </location>
</feature>
<feature type="transmembrane region" description="Helical" evidence="2">
    <location>
        <begin position="24"/>
        <end position="44"/>
    </location>
</feature>
<feature type="transmembrane region" description="Helical" evidence="2">
    <location>
        <begin position="93"/>
        <end position="113"/>
    </location>
</feature>
<feature type="transmembrane region" description="Helical" evidence="2">
    <location>
        <begin position="124"/>
        <end position="144"/>
    </location>
</feature>
<feature type="transmembrane region" description="Helical" evidence="2">
    <location>
        <begin position="151"/>
        <end position="171"/>
    </location>
</feature>
<feature type="transmembrane region" description="Helical" evidence="2">
    <location>
        <begin position="196"/>
        <end position="216"/>
    </location>
</feature>
<feature type="transmembrane region" description="Helical" evidence="2">
    <location>
        <begin position="217"/>
        <end position="237"/>
    </location>
</feature>
<feature type="transmembrane region" description="Helical" evidence="2">
    <location>
        <begin position="249"/>
        <end position="269"/>
    </location>
</feature>
<feature type="domain" description="ABC transmembrane type-1" evidence="2">
    <location>
        <begin position="86"/>
        <end position="267"/>
    </location>
</feature>
<reference key="1">
    <citation type="journal article" date="2007" name="Photosyn. Res.">
        <title>Complete nucleotide sequence of the freshwater unicellular cyanobacterium Synechococcus elongatus PCC 6301 chromosome: gene content and organization.</title>
        <authorList>
            <person name="Sugita C."/>
            <person name="Ogata K."/>
            <person name="Shikata M."/>
            <person name="Jikuya H."/>
            <person name="Takano J."/>
            <person name="Furumichi M."/>
            <person name="Kanehisa M."/>
            <person name="Omata T."/>
            <person name="Sugiura M."/>
            <person name="Sugita M."/>
        </authorList>
    </citation>
    <scope>NUCLEOTIDE SEQUENCE [LARGE SCALE GENOMIC DNA]</scope>
    <source>
        <strain>ATCC 27144 / PCC 6301 / SAUG 1402/1</strain>
    </source>
</reference>
<organism>
    <name type="scientific">Synechococcus sp. (strain ATCC 27144 / PCC 6301 / SAUG 1402/1)</name>
    <name type="common">Anacystis nidulans</name>
    <dbReference type="NCBI Taxonomy" id="269084"/>
    <lineage>
        <taxon>Bacteria</taxon>
        <taxon>Bacillati</taxon>
        <taxon>Cyanobacteriota</taxon>
        <taxon>Cyanophyceae</taxon>
        <taxon>Synechococcales</taxon>
        <taxon>Synechococcaceae</taxon>
        <taxon>Synechococcus</taxon>
    </lineage>
</organism>
<accession>Q5MZ55</accession>
<dbReference type="EMBL" id="AP008231">
    <property type="protein sequence ID" value="BAD80665.1"/>
    <property type="molecule type" value="Genomic_DNA"/>
</dbReference>
<dbReference type="SMR" id="Q5MZ55"/>
<dbReference type="KEGG" id="syc:syc2475_d"/>
<dbReference type="eggNOG" id="COG0600">
    <property type="taxonomic scope" value="Bacteria"/>
</dbReference>
<dbReference type="Proteomes" id="UP000001175">
    <property type="component" value="Chromosome"/>
</dbReference>
<dbReference type="GO" id="GO:0005886">
    <property type="term" value="C:plasma membrane"/>
    <property type="evidence" value="ECO:0007669"/>
    <property type="project" value="UniProtKB-SubCell"/>
</dbReference>
<dbReference type="GO" id="GO:0015112">
    <property type="term" value="F:nitrate transmembrane transporter activity"/>
    <property type="evidence" value="ECO:0007669"/>
    <property type="project" value="InterPro"/>
</dbReference>
<dbReference type="GO" id="GO:0006811">
    <property type="term" value="P:monoatomic ion transport"/>
    <property type="evidence" value="ECO:0007669"/>
    <property type="project" value="UniProtKB-KW"/>
</dbReference>
<dbReference type="CDD" id="cd06261">
    <property type="entry name" value="TM_PBP2"/>
    <property type="match status" value="1"/>
</dbReference>
<dbReference type="FunFam" id="1.10.3720.10:FF:000003">
    <property type="entry name" value="Aliphatic sulfonate ABC transporter permease"/>
    <property type="match status" value="1"/>
</dbReference>
<dbReference type="Gene3D" id="1.10.3720.10">
    <property type="entry name" value="MetI-like"/>
    <property type="match status" value="1"/>
</dbReference>
<dbReference type="InterPro" id="IPR000515">
    <property type="entry name" value="MetI-like"/>
</dbReference>
<dbReference type="InterPro" id="IPR035906">
    <property type="entry name" value="MetI-like_sf"/>
</dbReference>
<dbReference type="InterPro" id="IPR005889">
    <property type="entry name" value="NtrB"/>
</dbReference>
<dbReference type="NCBIfam" id="TIGR01183">
    <property type="entry name" value="ntrB"/>
    <property type="match status" value="1"/>
</dbReference>
<dbReference type="PANTHER" id="PTHR30151">
    <property type="entry name" value="ALKANE SULFONATE ABC TRANSPORTER-RELATED, MEMBRANE SUBUNIT"/>
    <property type="match status" value="1"/>
</dbReference>
<dbReference type="PANTHER" id="PTHR30151:SF7">
    <property type="entry name" value="NITRATE IMPORT PERMEASE PROTEIN NRTB"/>
    <property type="match status" value="1"/>
</dbReference>
<dbReference type="Pfam" id="PF00528">
    <property type="entry name" value="BPD_transp_1"/>
    <property type="match status" value="1"/>
</dbReference>
<dbReference type="SUPFAM" id="SSF161098">
    <property type="entry name" value="MetI-like"/>
    <property type="match status" value="1"/>
</dbReference>
<dbReference type="PROSITE" id="PS50928">
    <property type="entry name" value="ABC_TM1"/>
    <property type="match status" value="1"/>
</dbReference>
<keyword id="KW-0997">Cell inner membrane</keyword>
<keyword id="KW-1003">Cell membrane</keyword>
<keyword id="KW-0406">Ion transport</keyword>
<keyword id="KW-0472">Membrane</keyword>
<keyword id="KW-0812">Transmembrane</keyword>
<keyword id="KW-1133">Transmembrane helix</keyword>
<keyword id="KW-0813">Transport</keyword>
<protein>
    <recommendedName>
        <fullName>Bicarbonate transport system permease protein CmpB</fullName>
    </recommendedName>
</protein>
<evidence type="ECO:0000250" key="1"/>
<evidence type="ECO:0000255" key="2">
    <source>
        <dbReference type="PROSITE-ProRule" id="PRU00441"/>
    </source>
</evidence>
<evidence type="ECO:0000305" key="3"/>
<name>CMPB_SYNP6</name>
<gene>
    <name type="primary">cmpB</name>
    <name type="ordered locus">syc2475_d</name>
</gene>
<proteinExistence type="inferred from homology"/>
<comment type="function">
    <text evidence="1">Part of the ABC transporter complex CmpABCD involved in bicarbonate transport. Probably responsible for the translocation of the substrate across the membrane (By similarity).</text>
</comment>
<comment type="subunit">
    <text evidence="1">The complex is composed of two ATP-binding proteins (CmpC and CmpD), a transmembrane protein (CmpB) and a solute-binding protein (CmpA).</text>
</comment>
<comment type="subcellular location">
    <subcellularLocation>
        <location evidence="3">Cell inner membrane</location>
        <topology evidence="2">Multi-pass membrane protein</topology>
    </subcellularLocation>
</comment>
<comment type="induction">
    <text evidence="1">By carbon dioxide-limited conditions, probably via CmpR.</text>
</comment>
<comment type="similarity">
    <text evidence="3">Belongs to the binding-protein-dependent transport system permease family.</text>
</comment>
<sequence length="278" mass="31041">MVTARETRRNGSRPSGLKKWRQKLDGILLPLAGILGFLIIWQIFSSSGATRLPGPLSLFTEERTRELLLYPFLDRGGLDKGLFWQTIASLTRVAQGFSIAAIIGISVGILVGLNRQLNAMLDPLFQFLRMIAPLAWVPIALVAFQQNQPAAIFVIFITAVWPILINTAEGVRQIPQDYNNVARVLRMSKSKYLMKVVLPAALPYIFTGLRIAIGLSWLAIIAAEIVMSGIVGIGFFIWDAYQQNYVSDIILAVIYIGAVGLLLDRFVAWLQRWILRNM</sequence>